<organism>
    <name type="scientific">Mycobacterium bovis (strain ATCC BAA-935 / AF2122/97)</name>
    <dbReference type="NCBI Taxonomy" id="233413"/>
    <lineage>
        <taxon>Bacteria</taxon>
        <taxon>Bacillati</taxon>
        <taxon>Actinomycetota</taxon>
        <taxon>Actinomycetes</taxon>
        <taxon>Mycobacteriales</taxon>
        <taxon>Mycobacteriaceae</taxon>
        <taxon>Mycobacterium</taxon>
        <taxon>Mycobacterium tuberculosis complex</taxon>
    </lineage>
</organism>
<dbReference type="EC" id="5.1.1.1" evidence="2"/>
<dbReference type="EMBL" id="LT708304">
    <property type="protein sequence ID" value="SIU02085.1"/>
    <property type="status" value="ALT_INIT"/>
    <property type="molecule type" value="Genomic_DNA"/>
</dbReference>
<dbReference type="RefSeq" id="NP_857097.1">
    <property type="nucleotide sequence ID" value="NC_002945.3"/>
</dbReference>
<dbReference type="SMR" id="P0A4X3"/>
<dbReference type="KEGG" id="mbo:BQ2027_MB3457C"/>
<dbReference type="PATRIC" id="fig|233413.5.peg.3792"/>
<dbReference type="UniPathway" id="UPA00042">
    <property type="reaction ID" value="UER00497"/>
</dbReference>
<dbReference type="Proteomes" id="UP000001419">
    <property type="component" value="Chromosome"/>
</dbReference>
<dbReference type="GO" id="GO:0005829">
    <property type="term" value="C:cytosol"/>
    <property type="evidence" value="ECO:0007669"/>
    <property type="project" value="TreeGrafter"/>
</dbReference>
<dbReference type="GO" id="GO:0008784">
    <property type="term" value="F:alanine racemase activity"/>
    <property type="evidence" value="ECO:0007669"/>
    <property type="project" value="UniProtKB-UniRule"/>
</dbReference>
<dbReference type="GO" id="GO:0030170">
    <property type="term" value="F:pyridoxal phosphate binding"/>
    <property type="evidence" value="ECO:0007669"/>
    <property type="project" value="UniProtKB-UniRule"/>
</dbReference>
<dbReference type="GO" id="GO:0030632">
    <property type="term" value="P:D-alanine biosynthetic process"/>
    <property type="evidence" value="ECO:0007669"/>
    <property type="project" value="UniProtKB-UniRule"/>
</dbReference>
<dbReference type="GO" id="GO:0009252">
    <property type="term" value="P:peptidoglycan biosynthetic process"/>
    <property type="evidence" value="ECO:0007669"/>
    <property type="project" value="TreeGrafter"/>
</dbReference>
<dbReference type="CDD" id="cd00430">
    <property type="entry name" value="PLPDE_III_AR"/>
    <property type="match status" value="1"/>
</dbReference>
<dbReference type="FunFam" id="2.40.37.10:FF:000015">
    <property type="entry name" value="Alanine racemase"/>
    <property type="match status" value="1"/>
</dbReference>
<dbReference type="FunFam" id="3.20.20.10:FF:000002">
    <property type="entry name" value="Alanine racemase"/>
    <property type="match status" value="1"/>
</dbReference>
<dbReference type="Gene3D" id="3.20.20.10">
    <property type="entry name" value="Alanine racemase"/>
    <property type="match status" value="1"/>
</dbReference>
<dbReference type="Gene3D" id="2.40.37.10">
    <property type="entry name" value="Lyase, Ornithine Decarboxylase, Chain A, domain 1"/>
    <property type="match status" value="1"/>
</dbReference>
<dbReference type="HAMAP" id="MF_01201">
    <property type="entry name" value="Ala_racemase"/>
    <property type="match status" value="1"/>
</dbReference>
<dbReference type="InterPro" id="IPR000821">
    <property type="entry name" value="Ala_racemase"/>
</dbReference>
<dbReference type="InterPro" id="IPR009006">
    <property type="entry name" value="Ala_racemase/Decarboxylase_C"/>
</dbReference>
<dbReference type="InterPro" id="IPR011079">
    <property type="entry name" value="Ala_racemase_C"/>
</dbReference>
<dbReference type="InterPro" id="IPR001608">
    <property type="entry name" value="Ala_racemase_N"/>
</dbReference>
<dbReference type="InterPro" id="IPR020622">
    <property type="entry name" value="Ala_racemase_pyridoxalP-BS"/>
</dbReference>
<dbReference type="InterPro" id="IPR029066">
    <property type="entry name" value="PLP-binding_barrel"/>
</dbReference>
<dbReference type="NCBIfam" id="TIGR00492">
    <property type="entry name" value="alr"/>
    <property type="match status" value="1"/>
</dbReference>
<dbReference type="PANTHER" id="PTHR30511">
    <property type="entry name" value="ALANINE RACEMASE"/>
    <property type="match status" value="1"/>
</dbReference>
<dbReference type="PANTHER" id="PTHR30511:SF0">
    <property type="entry name" value="ALANINE RACEMASE, CATABOLIC-RELATED"/>
    <property type="match status" value="1"/>
</dbReference>
<dbReference type="Pfam" id="PF00842">
    <property type="entry name" value="Ala_racemase_C"/>
    <property type="match status" value="1"/>
</dbReference>
<dbReference type="Pfam" id="PF01168">
    <property type="entry name" value="Ala_racemase_N"/>
    <property type="match status" value="1"/>
</dbReference>
<dbReference type="PRINTS" id="PR00992">
    <property type="entry name" value="ALARACEMASE"/>
</dbReference>
<dbReference type="SMART" id="SM01005">
    <property type="entry name" value="Ala_racemase_C"/>
    <property type="match status" value="1"/>
</dbReference>
<dbReference type="SUPFAM" id="SSF50621">
    <property type="entry name" value="Alanine racemase C-terminal domain-like"/>
    <property type="match status" value="1"/>
</dbReference>
<dbReference type="SUPFAM" id="SSF51419">
    <property type="entry name" value="PLP-binding barrel"/>
    <property type="match status" value="1"/>
</dbReference>
<dbReference type="PROSITE" id="PS00395">
    <property type="entry name" value="ALANINE_RACEMASE"/>
    <property type="match status" value="1"/>
</dbReference>
<accession>P0A4X3</accession>
<accession>A0A1R3Y5U2</accession>
<accession>Q50705</accession>
<accession>X2BNP3</accession>
<reference key="1">
    <citation type="journal article" date="2003" name="Proc. Natl. Acad. Sci. U.S.A.">
        <title>The complete genome sequence of Mycobacterium bovis.</title>
        <authorList>
            <person name="Garnier T."/>
            <person name="Eiglmeier K."/>
            <person name="Camus J.-C."/>
            <person name="Medina N."/>
            <person name="Mansoor H."/>
            <person name="Pryor M."/>
            <person name="Duthoy S."/>
            <person name="Grondin S."/>
            <person name="Lacroix C."/>
            <person name="Monsempe C."/>
            <person name="Simon S."/>
            <person name="Harris B."/>
            <person name="Atkin R."/>
            <person name="Doggett J."/>
            <person name="Mayes R."/>
            <person name="Keating L."/>
            <person name="Wheeler P.R."/>
            <person name="Parkhill J."/>
            <person name="Barrell B.G."/>
            <person name="Cole S.T."/>
            <person name="Gordon S.V."/>
            <person name="Hewinson R.G."/>
        </authorList>
    </citation>
    <scope>NUCLEOTIDE SEQUENCE [LARGE SCALE GENOMIC DNA]</scope>
    <source>
        <strain>ATCC BAA-935 / AF2122/97</strain>
    </source>
</reference>
<reference key="2">
    <citation type="journal article" date="2017" name="Genome Announc.">
        <title>Updated reference genome sequence and annotation of Mycobacterium bovis AF2122/97.</title>
        <authorList>
            <person name="Malone K.M."/>
            <person name="Farrell D."/>
            <person name="Stuber T.P."/>
            <person name="Schubert O.T."/>
            <person name="Aebersold R."/>
            <person name="Robbe-Austerman S."/>
            <person name="Gordon S.V."/>
        </authorList>
    </citation>
    <scope>NUCLEOTIDE SEQUENCE [LARGE SCALE GENOMIC DNA]</scope>
    <scope>GENOME REANNOTATION</scope>
    <source>
        <strain>ATCC BAA-935 / AF2122/97</strain>
    </source>
</reference>
<comment type="function">
    <text evidence="2">Catalyzes the interconversion of L-alanine and D-alanine. May also act on other amino acids.</text>
</comment>
<comment type="catalytic activity">
    <reaction evidence="2">
        <text>L-alanine = D-alanine</text>
        <dbReference type="Rhea" id="RHEA:20249"/>
        <dbReference type="ChEBI" id="CHEBI:57416"/>
        <dbReference type="ChEBI" id="CHEBI:57972"/>
        <dbReference type="EC" id="5.1.1.1"/>
    </reaction>
</comment>
<comment type="cofactor">
    <cofactor evidence="2">
        <name>pyridoxal 5'-phosphate</name>
        <dbReference type="ChEBI" id="CHEBI:597326"/>
    </cofactor>
</comment>
<comment type="pathway">
    <text evidence="2">Amino-acid biosynthesis; D-alanine biosynthesis; D-alanine from L-alanine: step 1/1.</text>
</comment>
<comment type="similarity">
    <text evidence="2">Belongs to the alanine racemase family.</text>
</comment>
<comment type="sequence caution" evidence="1">
    <conflict type="erroneous initiation">
        <sequence resource="EMBL-CDS" id="SIU02085"/>
    </conflict>
    <text>Extended N-terminus.</text>
</comment>
<protein>
    <recommendedName>
        <fullName evidence="2">Alanine racemase</fullName>
        <ecNumber evidence="2">5.1.1.1</ecNumber>
    </recommendedName>
</protein>
<keyword id="KW-0413">Isomerase</keyword>
<keyword id="KW-0663">Pyridoxal phosphate</keyword>
<keyword id="KW-1185">Reference proteome</keyword>
<sequence length="384" mass="40724">MTPISQTPGLLAEAMVDLGAIEHNVRVLREHAGHAQLMAVVKADGYGHGATRVAQTALGAGAAELGVATVDEALALRADGITAPVLAWLHPPGIDFGPALLADVQVAVSSLRQLDELLHAVRRTGRTATVTVKVDTGLNRNGVGPAQFPAMLTALRQAMAEDAVRLRGLMSHMVYADKPDDSINDVQAQRFTAFLAQAREQGVRFEVAHLSNSSATMARPDLTFDLVRPGIAVYGLSPVPALGDMGLVPAMTVKCAVALVKSIRAGEGVSYGHTWIAPRDTNLALLPIGYADGVFRSLGGRLEVLINGRRCPGVGRICMDQFMVDLGPGPLDVAEGDEAILFGPGIRGEPTAQDWADLVGTIHYEVVTSPRGRITRTYREAENR</sequence>
<evidence type="ECO:0000250" key="1">
    <source>
        <dbReference type="UniProtKB" id="P9WQA9"/>
    </source>
</evidence>
<evidence type="ECO:0000255" key="2">
    <source>
        <dbReference type="HAMAP-Rule" id="MF_01201"/>
    </source>
</evidence>
<name>ALR_MYCBO</name>
<proteinExistence type="inferred from homology"/>
<gene>
    <name type="primary">alr</name>
    <name type="ordered locus">BQ2027_MB3457C</name>
</gene>
<feature type="chain" id="PRO_0000114536" description="Alanine racemase">
    <location>
        <begin position="1"/>
        <end position="384"/>
    </location>
</feature>
<feature type="active site" description="Proton acceptor; specific for D-alanine" evidence="2">
    <location>
        <position position="42"/>
    </location>
</feature>
<feature type="active site" description="Proton acceptor; specific for L-alanine" evidence="2">
    <location>
        <position position="271"/>
    </location>
</feature>
<feature type="binding site" evidence="2">
    <location>
        <position position="140"/>
    </location>
    <ligand>
        <name>substrate</name>
    </ligand>
</feature>
<feature type="binding site" evidence="2">
    <location>
        <position position="319"/>
    </location>
    <ligand>
        <name>substrate</name>
    </ligand>
</feature>
<feature type="modified residue" description="N6-(pyridoxal phosphate)lysine" evidence="2">
    <location>
        <position position="42"/>
    </location>
</feature>